<dbReference type="EMBL" id="DQ226511">
    <property type="protein sequence ID" value="ABB20977.1"/>
    <property type="molecule type" value="Genomic_DNA"/>
</dbReference>
<dbReference type="RefSeq" id="YP_762282.1">
    <property type="nucleotide sequence ID" value="NC_008359.1"/>
</dbReference>
<dbReference type="GeneID" id="4290641"/>
<dbReference type="GO" id="GO:0009507">
    <property type="term" value="C:chloroplast"/>
    <property type="evidence" value="ECO:0007669"/>
    <property type="project" value="UniProtKB-SubCell"/>
</dbReference>
<dbReference type="GO" id="GO:1990904">
    <property type="term" value="C:ribonucleoprotein complex"/>
    <property type="evidence" value="ECO:0007669"/>
    <property type="project" value="UniProtKB-KW"/>
</dbReference>
<dbReference type="GO" id="GO:0005840">
    <property type="term" value="C:ribosome"/>
    <property type="evidence" value="ECO:0007669"/>
    <property type="project" value="UniProtKB-KW"/>
</dbReference>
<dbReference type="GO" id="GO:0003735">
    <property type="term" value="F:structural constituent of ribosome"/>
    <property type="evidence" value="ECO:0007669"/>
    <property type="project" value="InterPro"/>
</dbReference>
<dbReference type="GO" id="GO:0006412">
    <property type="term" value="P:translation"/>
    <property type="evidence" value="ECO:0007669"/>
    <property type="project" value="UniProtKB-UniRule"/>
</dbReference>
<dbReference type="Gene3D" id="2.20.28.120">
    <property type="entry name" value="Ribosomal protein L33"/>
    <property type="match status" value="1"/>
</dbReference>
<dbReference type="HAMAP" id="MF_00294">
    <property type="entry name" value="Ribosomal_bL33"/>
    <property type="match status" value="1"/>
</dbReference>
<dbReference type="InterPro" id="IPR001705">
    <property type="entry name" value="Ribosomal_bL33"/>
</dbReference>
<dbReference type="InterPro" id="IPR018264">
    <property type="entry name" value="Ribosomal_bL33_CS"/>
</dbReference>
<dbReference type="InterPro" id="IPR038584">
    <property type="entry name" value="Ribosomal_bL33_sf"/>
</dbReference>
<dbReference type="InterPro" id="IPR011332">
    <property type="entry name" value="Ribosomal_zn-bd"/>
</dbReference>
<dbReference type="NCBIfam" id="NF001764">
    <property type="entry name" value="PRK00504.1"/>
    <property type="match status" value="1"/>
</dbReference>
<dbReference type="NCBIfam" id="NF001860">
    <property type="entry name" value="PRK00595.1"/>
    <property type="match status" value="1"/>
</dbReference>
<dbReference type="NCBIfam" id="TIGR01023">
    <property type="entry name" value="rpmG_bact"/>
    <property type="match status" value="1"/>
</dbReference>
<dbReference type="PANTHER" id="PTHR43168">
    <property type="entry name" value="50S RIBOSOMAL PROTEIN L33, CHLOROPLASTIC"/>
    <property type="match status" value="1"/>
</dbReference>
<dbReference type="PANTHER" id="PTHR43168:SF2">
    <property type="entry name" value="LARGE RIBOSOMAL SUBUNIT PROTEIN BL33C"/>
    <property type="match status" value="1"/>
</dbReference>
<dbReference type="Pfam" id="PF00471">
    <property type="entry name" value="Ribosomal_L33"/>
    <property type="match status" value="1"/>
</dbReference>
<dbReference type="SUPFAM" id="SSF57829">
    <property type="entry name" value="Zn-binding ribosomal proteins"/>
    <property type="match status" value="1"/>
</dbReference>
<dbReference type="PROSITE" id="PS00582">
    <property type="entry name" value="RIBOSOMAL_L33"/>
    <property type="match status" value="1"/>
</dbReference>
<reference key="1">
    <citation type="submission" date="2005-09" db="EMBL/GenBank/DDBJ databases">
        <title>The chloroplast genome of mulberry: structural features and comparative analysis.</title>
        <authorList>
            <person name="Ravi V."/>
            <person name="Khurana J.P."/>
            <person name="Tyagi A.K."/>
            <person name="Khurana P."/>
        </authorList>
    </citation>
    <scope>NUCLEOTIDE SEQUENCE [LARGE SCALE GENOMIC DNA]</scope>
    <source>
        <strain>cv. K2</strain>
    </source>
</reference>
<geneLocation type="chloroplast"/>
<name>RK33_MORIN</name>
<sequence>MAKGKDARVTIILECTSCLRNRVNKESRGISRYITQKNRHNTPSRLELRKFCPSCYKHTIHGELKK</sequence>
<proteinExistence type="inferred from homology"/>
<feature type="chain" id="PRO_0000276509" description="Large ribosomal subunit protein bL33c">
    <location>
        <begin position="1"/>
        <end position="66"/>
    </location>
</feature>
<protein>
    <recommendedName>
        <fullName evidence="1">Large ribosomal subunit protein bL33c</fullName>
    </recommendedName>
    <alternativeName>
        <fullName evidence="2">50S ribosomal protein L33, chloroplastic</fullName>
    </alternativeName>
</protein>
<accession>Q09WZ6</accession>
<gene>
    <name evidence="1" type="primary">rpl33</name>
    <name type="ordered locus">MoinCp042</name>
</gene>
<evidence type="ECO:0000255" key="1">
    <source>
        <dbReference type="HAMAP-Rule" id="MF_00294"/>
    </source>
</evidence>
<evidence type="ECO:0000305" key="2"/>
<keyword id="KW-0150">Chloroplast</keyword>
<keyword id="KW-0934">Plastid</keyword>
<keyword id="KW-0687">Ribonucleoprotein</keyword>
<keyword id="KW-0689">Ribosomal protein</keyword>
<organism>
    <name type="scientific">Morus indica</name>
    <name type="common">Mulberry</name>
    <dbReference type="NCBI Taxonomy" id="248361"/>
    <lineage>
        <taxon>Eukaryota</taxon>
        <taxon>Viridiplantae</taxon>
        <taxon>Streptophyta</taxon>
        <taxon>Embryophyta</taxon>
        <taxon>Tracheophyta</taxon>
        <taxon>Spermatophyta</taxon>
        <taxon>Magnoliopsida</taxon>
        <taxon>eudicotyledons</taxon>
        <taxon>Gunneridae</taxon>
        <taxon>Pentapetalae</taxon>
        <taxon>rosids</taxon>
        <taxon>fabids</taxon>
        <taxon>Rosales</taxon>
        <taxon>Moraceae</taxon>
        <taxon>Moreae</taxon>
        <taxon>Morus</taxon>
    </lineage>
</organism>
<comment type="subcellular location">
    <subcellularLocation>
        <location>Plastid</location>
        <location>Chloroplast</location>
    </subcellularLocation>
</comment>
<comment type="similarity">
    <text evidence="1">Belongs to the bacterial ribosomal protein bL33 family.</text>
</comment>